<dbReference type="EMBL" id="AF002134">
    <property type="protein sequence ID" value="AAC24464.1"/>
    <property type="molecule type" value="Genomic_DNA"/>
</dbReference>
<dbReference type="EMBL" id="CP017626">
    <property type="protein sequence ID" value="AOW29364.1"/>
    <property type="molecule type" value="Genomic_DNA"/>
</dbReference>
<dbReference type="RefSeq" id="XP_715551.1">
    <property type="nucleotide sequence ID" value="XM_710458.2"/>
</dbReference>
<dbReference type="SMR" id="P87220"/>
<dbReference type="FunCoup" id="P87220">
    <property type="interactions" value="913"/>
</dbReference>
<dbReference type="STRING" id="237561.P87220"/>
<dbReference type="EnsemblFungi" id="C4_06400C_A-T">
    <property type="protein sequence ID" value="C4_06400C_A-T-p1"/>
    <property type="gene ID" value="C4_06400C_A"/>
</dbReference>
<dbReference type="GeneID" id="3642798"/>
<dbReference type="KEGG" id="cal:CAALFM_C406400CA"/>
<dbReference type="CGD" id="CAL0000187911">
    <property type="gene designation" value="VMA8"/>
</dbReference>
<dbReference type="VEuPathDB" id="FungiDB:C4_06400C_A"/>
<dbReference type="eggNOG" id="KOG1647">
    <property type="taxonomic scope" value="Eukaryota"/>
</dbReference>
<dbReference type="HOGENOM" id="CLU_069688_0_1_1"/>
<dbReference type="InParanoid" id="P87220"/>
<dbReference type="OMA" id="REEFFRM"/>
<dbReference type="OrthoDB" id="7676488at2759"/>
<dbReference type="PRO" id="PR:P87220"/>
<dbReference type="Proteomes" id="UP000000559">
    <property type="component" value="Chromosome 4"/>
</dbReference>
<dbReference type="GO" id="GO:0000329">
    <property type="term" value="C:fungal-type vacuole membrane"/>
    <property type="evidence" value="ECO:0000318"/>
    <property type="project" value="GO_Central"/>
</dbReference>
<dbReference type="GO" id="GO:0045121">
    <property type="term" value="C:membrane raft"/>
    <property type="evidence" value="ECO:0007669"/>
    <property type="project" value="EnsemblFungi"/>
</dbReference>
<dbReference type="GO" id="GO:0016471">
    <property type="term" value="C:vacuolar proton-transporting V-type ATPase complex"/>
    <property type="evidence" value="ECO:0000318"/>
    <property type="project" value="GO_Central"/>
</dbReference>
<dbReference type="GO" id="GO:0000221">
    <property type="term" value="C:vacuolar proton-transporting V-type ATPase, V1 domain"/>
    <property type="evidence" value="ECO:0000250"/>
    <property type="project" value="UniProtKB"/>
</dbReference>
<dbReference type="GO" id="GO:0046961">
    <property type="term" value="F:proton-transporting ATPase activity, rotational mechanism"/>
    <property type="evidence" value="ECO:0007669"/>
    <property type="project" value="EnsemblFungi"/>
</dbReference>
<dbReference type="GO" id="GO:0007035">
    <property type="term" value="P:vacuolar acidification"/>
    <property type="evidence" value="ECO:0000318"/>
    <property type="project" value="GO_Central"/>
</dbReference>
<dbReference type="FunFam" id="1.10.287.3240:FF:000002">
    <property type="entry name" value="Vacuolar atp synthase subunit d"/>
    <property type="match status" value="1"/>
</dbReference>
<dbReference type="Gene3D" id="1.10.287.3240">
    <property type="match status" value="1"/>
</dbReference>
<dbReference type="InterPro" id="IPR002699">
    <property type="entry name" value="V_ATPase_D"/>
</dbReference>
<dbReference type="NCBIfam" id="TIGR00309">
    <property type="entry name" value="V_ATPase_subD"/>
    <property type="match status" value="1"/>
</dbReference>
<dbReference type="PANTHER" id="PTHR11671">
    <property type="entry name" value="V-TYPE ATP SYNTHASE SUBUNIT D"/>
    <property type="match status" value="1"/>
</dbReference>
<dbReference type="Pfam" id="PF01813">
    <property type="entry name" value="ATP-synt_D"/>
    <property type="match status" value="1"/>
</dbReference>
<keyword id="KW-0375">Hydrogen ion transport</keyword>
<keyword id="KW-0406">Ion transport</keyword>
<keyword id="KW-0472">Membrane</keyword>
<keyword id="KW-1185">Reference proteome</keyword>
<keyword id="KW-0813">Transport</keyword>
<keyword id="KW-0926">Vacuole</keyword>
<feature type="chain" id="PRO_0000144241" description="V-type proton ATPase subunit D">
    <location>
        <begin position="1"/>
        <end position="267"/>
    </location>
</feature>
<evidence type="ECO:0000250" key="1">
    <source>
        <dbReference type="UniProtKB" id="P32610"/>
    </source>
</evidence>
<evidence type="ECO:0000305" key="2"/>
<name>VATD_CANAL</name>
<reference key="1">
    <citation type="submission" date="1997-05" db="EMBL/GenBank/DDBJ databases">
        <authorList>
            <person name="Janbon G."/>
            <person name="Rustchenko E."/>
            <person name="Sherman F."/>
        </authorList>
    </citation>
    <scope>NUCLEOTIDE SEQUENCE [GENOMIC DNA]</scope>
    <source>
        <strain>SOR17</strain>
    </source>
</reference>
<reference key="2">
    <citation type="journal article" date="2004" name="Proc. Natl. Acad. Sci. U.S.A.">
        <title>The diploid genome sequence of Candida albicans.</title>
        <authorList>
            <person name="Jones T."/>
            <person name="Federspiel N.A."/>
            <person name="Chibana H."/>
            <person name="Dungan J."/>
            <person name="Kalman S."/>
            <person name="Magee B.B."/>
            <person name="Newport G."/>
            <person name="Thorstenson Y.R."/>
            <person name="Agabian N."/>
            <person name="Magee P.T."/>
            <person name="Davis R.W."/>
            <person name="Scherer S."/>
        </authorList>
    </citation>
    <scope>NUCLEOTIDE SEQUENCE [LARGE SCALE GENOMIC DNA]</scope>
    <source>
        <strain>SC5314 / ATCC MYA-2876</strain>
    </source>
</reference>
<reference key="3">
    <citation type="journal article" date="2007" name="Genome Biol.">
        <title>Assembly of the Candida albicans genome into sixteen supercontigs aligned on the eight chromosomes.</title>
        <authorList>
            <person name="van het Hoog M."/>
            <person name="Rast T.J."/>
            <person name="Martchenko M."/>
            <person name="Grindle S."/>
            <person name="Dignard D."/>
            <person name="Hogues H."/>
            <person name="Cuomo C."/>
            <person name="Berriman M."/>
            <person name="Scherer S."/>
            <person name="Magee B.B."/>
            <person name="Whiteway M."/>
            <person name="Chibana H."/>
            <person name="Nantel A."/>
            <person name="Magee P.T."/>
        </authorList>
    </citation>
    <scope>GENOME REANNOTATION</scope>
    <source>
        <strain>SC5314 / ATCC MYA-2876</strain>
    </source>
</reference>
<reference key="4">
    <citation type="journal article" date="2013" name="Genome Biol.">
        <title>Assembly of a phased diploid Candida albicans genome facilitates allele-specific measurements and provides a simple model for repeat and indel structure.</title>
        <authorList>
            <person name="Muzzey D."/>
            <person name="Schwartz K."/>
            <person name="Weissman J.S."/>
            <person name="Sherlock G."/>
        </authorList>
    </citation>
    <scope>NUCLEOTIDE SEQUENCE [LARGE SCALE GENOMIC DNA]</scope>
    <scope>GENOME REANNOTATION</scope>
    <source>
        <strain>SC5314 / ATCC MYA-2876</strain>
    </source>
</reference>
<proteinExistence type="inferred from homology"/>
<comment type="function">
    <text evidence="1">Subunit of the V1 complex of vacuolar(H+)-ATPase (V-ATPase), a multisubunit enzyme composed of a peripheral complex (V1) that hydrolyzes ATP and a membrane integral complex (V0) that translocates protons (By similarity). V-ATPase is responsible for acidifying and maintaining the pH of intracellular compartments (By similarity).</text>
</comment>
<comment type="subunit">
    <text evidence="1">V-ATPase is a heteromultimeric enzyme composed of a peripheral catalytic V1 complex (components A to H) attached to an integral membrane V0 proton pore complex (components: a, c, c', c'', d, e, f and VOA1).</text>
</comment>
<comment type="subcellular location">
    <subcellularLocation>
        <location evidence="1">Vacuole membrane</location>
        <topology evidence="2">Peripheral membrane protein</topology>
        <orientation evidence="2">Cytoplasmic side</orientation>
    </subcellularLocation>
</comment>
<comment type="similarity">
    <text evidence="2">Belongs to the V-ATPase D subunit family.</text>
</comment>
<sequence length="267" mass="30020">MSGAGNREQVFPTRMTLGVMKSKLKGAQQGHSLLKRKSEALTKRFRDITQRIDDAKRKMGRVMQTAAFSLAEVQYATGDNISYQVQESVQKARFTVKAKQENVSGVFLPTFDSHINEDVNDFKLTALARGGQQVQKAKLIYSKAVETLVELASLQTAFIILDEVIKITNRRVNAIEHVIIPRTENTIAYINGELDEMDREEFYRLKKVQEKKQEAAAAAEQEEALAKAKAEGATDELAIQQDVEALDIKADKEEVDILQEKEDDVIF</sequence>
<accession>P87220</accession>
<accession>A0A1D8PMK5</accession>
<accession>Q5A1C4</accession>
<protein>
    <recommendedName>
        <fullName>V-type proton ATPase subunit D</fullName>
        <shortName>V-ATPase subunit D</shortName>
    </recommendedName>
    <alternativeName>
        <fullName>Vacuolar proton pump subunit D</fullName>
    </alternativeName>
</protein>
<gene>
    <name type="primary">VMA8</name>
    <name type="ordered locus">CAALFM_C406400CA</name>
    <name type="ORF">CaO19.10413</name>
    <name type="ORF">CaO19.2895</name>
</gene>
<organism>
    <name type="scientific">Candida albicans (strain SC5314 / ATCC MYA-2876)</name>
    <name type="common">Yeast</name>
    <dbReference type="NCBI Taxonomy" id="237561"/>
    <lineage>
        <taxon>Eukaryota</taxon>
        <taxon>Fungi</taxon>
        <taxon>Dikarya</taxon>
        <taxon>Ascomycota</taxon>
        <taxon>Saccharomycotina</taxon>
        <taxon>Pichiomycetes</taxon>
        <taxon>Debaryomycetaceae</taxon>
        <taxon>Candida/Lodderomyces clade</taxon>
        <taxon>Candida</taxon>
    </lineage>
</organism>